<gene>
    <name evidence="1" type="primary">pxpA</name>
    <name type="ordered locus">ABC3770</name>
</gene>
<evidence type="ECO:0000255" key="1">
    <source>
        <dbReference type="HAMAP-Rule" id="MF_00691"/>
    </source>
</evidence>
<feature type="chain" id="PRO_0000184989" description="5-oxoprolinase subunit A">
    <location>
        <begin position="1"/>
        <end position="253"/>
    </location>
</feature>
<sequence>MNAIDLNSDVGESYGAYTIGNDEKIMPYISSANIACGFHAGDAHVMRETVARALEHSVAIGAHPGLPDIGGFGRRNIDISPQEGYELVVYQIGALWAIAKAQGGKLHHVKPHGALYNMAAADQALAEAIANAVYDVDPNLVFYGLAGSALIAAGKKAGLKTASEVFADRTYQADGSLTSRRAPNALITDAKEASAQVLRMIQEGKVRTQQGTDVKIDAQTVCIHGDGAQAVAFAEQLKGELERHGITVKAGNC</sequence>
<dbReference type="EC" id="3.5.2.9" evidence="1"/>
<dbReference type="EMBL" id="AP006627">
    <property type="protein sequence ID" value="BAD66302.1"/>
    <property type="molecule type" value="Genomic_DNA"/>
</dbReference>
<dbReference type="RefSeq" id="WP_011248606.1">
    <property type="nucleotide sequence ID" value="NC_006582.1"/>
</dbReference>
<dbReference type="SMR" id="Q5WBF8"/>
<dbReference type="STRING" id="66692.ABC3770"/>
<dbReference type="KEGG" id="bcl:ABC3770"/>
<dbReference type="eggNOG" id="COG1540">
    <property type="taxonomic scope" value="Bacteria"/>
</dbReference>
<dbReference type="HOGENOM" id="CLU_069535_0_0_9"/>
<dbReference type="OrthoDB" id="9773478at2"/>
<dbReference type="Proteomes" id="UP000001168">
    <property type="component" value="Chromosome"/>
</dbReference>
<dbReference type="GO" id="GO:0017168">
    <property type="term" value="F:5-oxoprolinase (ATP-hydrolyzing) activity"/>
    <property type="evidence" value="ECO:0007669"/>
    <property type="project" value="UniProtKB-UniRule"/>
</dbReference>
<dbReference type="GO" id="GO:0005524">
    <property type="term" value="F:ATP binding"/>
    <property type="evidence" value="ECO:0007669"/>
    <property type="project" value="UniProtKB-UniRule"/>
</dbReference>
<dbReference type="GO" id="GO:0005975">
    <property type="term" value="P:carbohydrate metabolic process"/>
    <property type="evidence" value="ECO:0007669"/>
    <property type="project" value="InterPro"/>
</dbReference>
<dbReference type="CDD" id="cd10787">
    <property type="entry name" value="LamB_YcsF_like"/>
    <property type="match status" value="1"/>
</dbReference>
<dbReference type="Gene3D" id="3.20.20.370">
    <property type="entry name" value="Glycoside hydrolase/deacetylase"/>
    <property type="match status" value="1"/>
</dbReference>
<dbReference type="HAMAP" id="MF_00691">
    <property type="entry name" value="PxpA"/>
    <property type="match status" value="1"/>
</dbReference>
<dbReference type="InterPro" id="IPR011330">
    <property type="entry name" value="Glyco_hydro/deAcase_b/a-brl"/>
</dbReference>
<dbReference type="InterPro" id="IPR005501">
    <property type="entry name" value="LamB/YcsF/PxpA-like"/>
</dbReference>
<dbReference type="NCBIfam" id="NF003814">
    <property type="entry name" value="PRK05406.1-3"/>
    <property type="match status" value="1"/>
</dbReference>
<dbReference type="NCBIfam" id="NF003816">
    <property type="entry name" value="PRK05406.1-5"/>
    <property type="match status" value="1"/>
</dbReference>
<dbReference type="PANTHER" id="PTHR30292:SF0">
    <property type="entry name" value="5-OXOPROLINASE SUBUNIT A"/>
    <property type="match status" value="1"/>
</dbReference>
<dbReference type="PANTHER" id="PTHR30292">
    <property type="entry name" value="UNCHARACTERIZED PROTEIN YBGL-RELATED"/>
    <property type="match status" value="1"/>
</dbReference>
<dbReference type="Pfam" id="PF03746">
    <property type="entry name" value="LamB_YcsF"/>
    <property type="match status" value="1"/>
</dbReference>
<dbReference type="SUPFAM" id="SSF88713">
    <property type="entry name" value="Glycoside hydrolase/deacetylase"/>
    <property type="match status" value="1"/>
</dbReference>
<name>PXPA_SHOC1</name>
<comment type="function">
    <text evidence="1">Catalyzes the cleavage of 5-oxoproline to form L-glutamate coupled to the hydrolysis of ATP to ADP and inorganic phosphate.</text>
</comment>
<comment type="catalytic activity">
    <reaction evidence="1">
        <text>5-oxo-L-proline + ATP + 2 H2O = L-glutamate + ADP + phosphate + H(+)</text>
        <dbReference type="Rhea" id="RHEA:10348"/>
        <dbReference type="ChEBI" id="CHEBI:15377"/>
        <dbReference type="ChEBI" id="CHEBI:15378"/>
        <dbReference type="ChEBI" id="CHEBI:29985"/>
        <dbReference type="ChEBI" id="CHEBI:30616"/>
        <dbReference type="ChEBI" id="CHEBI:43474"/>
        <dbReference type="ChEBI" id="CHEBI:58402"/>
        <dbReference type="ChEBI" id="CHEBI:456216"/>
        <dbReference type="EC" id="3.5.2.9"/>
    </reaction>
</comment>
<comment type="subunit">
    <text evidence="1">Forms a complex composed of PxpA, PxpB and PxpC.</text>
</comment>
<comment type="similarity">
    <text evidence="1">Belongs to the LamB/PxpA family.</text>
</comment>
<organism>
    <name type="scientific">Shouchella clausii (strain KSM-K16)</name>
    <name type="common">Alkalihalobacillus clausii</name>
    <dbReference type="NCBI Taxonomy" id="66692"/>
    <lineage>
        <taxon>Bacteria</taxon>
        <taxon>Bacillati</taxon>
        <taxon>Bacillota</taxon>
        <taxon>Bacilli</taxon>
        <taxon>Bacillales</taxon>
        <taxon>Bacillaceae</taxon>
        <taxon>Shouchella</taxon>
    </lineage>
</organism>
<keyword id="KW-0067">ATP-binding</keyword>
<keyword id="KW-0378">Hydrolase</keyword>
<keyword id="KW-0547">Nucleotide-binding</keyword>
<keyword id="KW-1185">Reference proteome</keyword>
<proteinExistence type="inferred from homology"/>
<accession>Q5WBF8</accession>
<reference key="1">
    <citation type="submission" date="2003-10" db="EMBL/GenBank/DDBJ databases">
        <title>The complete genome sequence of the alkaliphilic Bacillus clausii KSM-K16.</title>
        <authorList>
            <person name="Takaki Y."/>
            <person name="Kageyama Y."/>
            <person name="Shimamura S."/>
            <person name="Suzuki H."/>
            <person name="Nishi S."/>
            <person name="Hatada Y."/>
            <person name="Kawai S."/>
            <person name="Ito S."/>
            <person name="Horikoshi K."/>
        </authorList>
    </citation>
    <scope>NUCLEOTIDE SEQUENCE [LARGE SCALE GENOMIC DNA]</scope>
    <source>
        <strain>KSM-K16</strain>
    </source>
</reference>
<protein>
    <recommendedName>
        <fullName evidence="1">5-oxoprolinase subunit A</fullName>
        <shortName evidence="1">5-OPase subunit A</shortName>
        <ecNumber evidence="1">3.5.2.9</ecNumber>
    </recommendedName>
    <alternativeName>
        <fullName evidence="1">5-oxoprolinase (ATP-hydrolyzing) subunit A</fullName>
    </alternativeName>
</protein>